<evidence type="ECO:0000255" key="1">
    <source>
        <dbReference type="HAMAP-Rule" id="MF_00639"/>
    </source>
</evidence>
<dbReference type="EC" id="6.3.2.9" evidence="1"/>
<dbReference type="EMBL" id="AP008937">
    <property type="protein sequence ID" value="BAG26909.1"/>
    <property type="molecule type" value="Genomic_DNA"/>
</dbReference>
<dbReference type="RefSeq" id="WP_012390998.1">
    <property type="nucleotide sequence ID" value="NC_010610.1"/>
</dbReference>
<dbReference type="SMR" id="B2GB77"/>
<dbReference type="GeneID" id="83715093"/>
<dbReference type="KEGG" id="lfe:LAF_0573"/>
<dbReference type="eggNOG" id="COG0771">
    <property type="taxonomic scope" value="Bacteria"/>
</dbReference>
<dbReference type="HOGENOM" id="CLU_032540_0_1_9"/>
<dbReference type="UniPathway" id="UPA00219"/>
<dbReference type="Proteomes" id="UP000001697">
    <property type="component" value="Chromosome"/>
</dbReference>
<dbReference type="GO" id="GO:0005737">
    <property type="term" value="C:cytoplasm"/>
    <property type="evidence" value="ECO:0007669"/>
    <property type="project" value="UniProtKB-SubCell"/>
</dbReference>
<dbReference type="GO" id="GO:0005524">
    <property type="term" value="F:ATP binding"/>
    <property type="evidence" value="ECO:0007669"/>
    <property type="project" value="UniProtKB-UniRule"/>
</dbReference>
<dbReference type="GO" id="GO:0008764">
    <property type="term" value="F:UDP-N-acetylmuramoylalanine-D-glutamate ligase activity"/>
    <property type="evidence" value="ECO:0007669"/>
    <property type="project" value="UniProtKB-UniRule"/>
</dbReference>
<dbReference type="GO" id="GO:0051301">
    <property type="term" value="P:cell division"/>
    <property type="evidence" value="ECO:0007669"/>
    <property type="project" value="UniProtKB-KW"/>
</dbReference>
<dbReference type="GO" id="GO:0071555">
    <property type="term" value="P:cell wall organization"/>
    <property type="evidence" value="ECO:0007669"/>
    <property type="project" value="UniProtKB-KW"/>
</dbReference>
<dbReference type="GO" id="GO:0009252">
    <property type="term" value="P:peptidoglycan biosynthetic process"/>
    <property type="evidence" value="ECO:0007669"/>
    <property type="project" value="UniProtKB-UniRule"/>
</dbReference>
<dbReference type="GO" id="GO:0008360">
    <property type="term" value="P:regulation of cell shape"/>
    <property type="evidence" value="ECO:0007669"/>
    <property type="project" value="UniProtKB-KW"/>
</dbReference>
<dbReference type="Gene3D" id="3.90.190.20">
    <property type="entry name" value="Mur ligase, C-terminal domain"/>
    <property type="match status" value="1"/>
</dbReference>
<dbReference type="Gene3D" id="3.40.1190.10">
    <property type="entry name" value="Mur-like, catalytic domain"/>
    <property type="match status" value="1"/>
</dbReference>
<dbReference type="Gene3D" id="3.40.50.720">
    <property type="entry name" value="NAD(P)-binding Rossmann-like Domain"/>
    <property type="match status" value="1"/>
</dbReference>
<dbReference type="HAMAP" id="MF_00639">
    <property type="entry name" value="MurD"/>
    <property type="match status" value="1"/>
</dbReference>
<dbReference type="InterPro" id="IPR036565">
    <property type="entry name" value="Mur-like_cat_sf"/>
</dbReference>
<dbReference type="InterPro" id="IPR004101">
    <property type="entry name" value="Mur_ligase_C"/>
</dbReference>
<dbReference type="InterPro" id="IPR036615">
    <property type="entry name" value="Mur_ligase_C_dom_sf"/>
</dbReference>
<dbReference type="InterPro" id="IPR013221">
    <property type="entry name" value="Mur_ligase_cen"/>
</dbReference>
<dbReference type="InterPro" id="IPR005762">
    <property type="entry name" value="MurD"/>
</dbReference>
<dbReference type="NCBIfam" id="TIGR01087">
    <property type="entry name" value="murD"/>
    <property type="match status" value="1"/>
</dbReference>
<dbReference type="PANTHER" id="PTHR43692">
    <property type="entry name" value="UDP-N-ACETYLMURAMOYLALANINE--D-GLUTAMATE LIGASE"/>
    <property type="match status" value="1"/>
</dbReference>
<dbReference type="PANTHER" id="PTHR43692:SF1">
    <property type="entry name" value="UDP-N-ACETYLMURAMOYLALANINE--D-GLUTAMATE LIGASE"/>
    <property type="match status" value="1"/>
</dbReference>
<dbReference type="Pfam" id="PF02875">
    <property type="entry name" value="Mur_ligase_C"/>
    <property type="match status" value="1"/>
</dbReference>
<dbReference type="Pfam" id="PF08245">
    <property type="entry name" value="Mur_ligase_M"/>
    <property type="match status" value="1"/>
</dbReference>
<dbReference type="Pfam" id="PF21799">
    <property type="entry name" value="MurD-like_N"/>
    <property type="match status" value="1"/>
</dbReference>
<dbReference type="SUPFAM" id="SSF51984">
    <property type="entry name" value="MurCD N-terminal domain"/>
    <property type="match status" value="1"/>
</dbReference>
<dbReference type="SUPFAM" id="SSF53623">
    <property type="entry name" value="MurD-like peptide ligases, catalytic domain"/>
    <property type="match status" value="1"/>
</dbReference>
<dbReference type="SUPFAM" id="SSF53244">
    <property type="entry name" value="MurD-like peptide ligases, peptide-binding domain"/>
    <property type="match status" value="1"/>
</dbReference>
<keyword id="KW-0067">ATP-binding</keyword>
<keyword id="KW-0131">Cell cycle</keyword>
<keyword id="KW-0132">Cell division</keyword>
<keyword id="KW-0133">Cell shape</keyword>
<keyword id="KW-0961">Cell wall biogenesis/degradation</keyword>
<keyword id="KW-0963">Cytoplasm</keyword>
<keyword id="KW-0436">Ligase</keyword>
<keyword id="KW-0547">Nucleotide-binding</keyword>
<keyword id="KW-0573">Peptidoglycan synthesis</keyword>
<keyword id="KW-1185">Reference proteome</keyword>
<name>MURD_LIMF3</name>
<gene>
    <name evidence="1" type="primary">murD</name>
    <name type="ordered locus">LAF_0573</name>
</gene>
<comment type="function">
    <text evidence="1">Cell wall formation. Catalyzes the addition of glutamate to the nucleotide precursor UDP-N-acetylmuramoyl-L-alanine (UMA).</text>
</comment>
<comment type="catalytic activity">
    <reaction evidence="1">
        <text>UDP-N-acetyl-alpha-D-muramoyl-L-alanine + D-glutamate + ATP = UDP-N-acetyl-alpha-D-muramoyl-L-alanyl-D-glutamate + ADP + phosphate + H(+)</text>
        <dbReference type="Rhea" id="RHEA:16429"/>
        <dbReference type="ChEBI" id="CHEBI:15378"/>
        <dbReference type="ChEBI" id="CHEBI:29986"/>
        <dbReference type="ChEBI" id="CHEBI:30616"/>
        <dbReference type="ChEBI" id="CHEBI:43474"/>
        <dbReference type="ChEBI" id="CHEBI:83898"/>
        <dbReference type="ChEBI" id="CHEBI:83900"/>
        <dbReference type="ChEBI" id="CHEBI:456216"/>
        <dbReference type="EC" id="6.3.2.9"/>
    </reaction>
</comment>
<comment type="pathway">
    <text evidence="1">Cell wall biogenesis; peptidoglycan biosynthesis.</text>
</comment>
<comment type="subcellular location">
    <subcellularLocation>
        <location evidence="1">Cytoplasm</location>
    </subcellularLocation>
</comment>
<comment type="similarity">
    <text evidence="1">Belongs to the MurCDEF family.</text>
</comment>
<organism>
    <name type="scientific">Limosilactobacillus fermentum (strain NBRC 3956 / LMG 18251)</name>
    <name type="common">Lactobacillus fermentum</name>
    <dbReference type="NCBI Taxonomy" id="334390"/>
    <lineage>
        <taxon>Bacteria</taxon>
        <taxon>Bacillati</taxon>
        <taxon>Bacillota</taxon>
        <taxon>Bacilli</taxon>
        <taxon>Lactobacillales</taxon>
        <taxon>Lactobacillaceae</taxon>
        <taxon>Limosilactobacillus</taxon>
    </lineage>
</organism>
<feature type="chain" id="PRO_1000130861" description="UDP-N-acetylmuramoylalanine--D-glutamate ligase">
    <location>
        <begin position="1"/>
        <end position="458"/>
    </location>
</feature>
<feature type="binding site" evidence="1">
    <location>
        <begin position="119"/>
        <end position="125"/>
    </location>
    <ligand>
        <name>ATP</name>
        <dbReference type="ChEBI" id="CHEBI:30616"/>
    </ligand>
</feature>
<accession>B2GB77</accession>
<sequence length="458" mass="50202">MKQINDYKGKRVLVLGFGISGLNAAYLLQKLGATVVANDQQVPKDPRVVADLEGAGITAVTGSNPLSLAEEGFDLVVKNPGIPYDTPLVAAFVKKGTPIITELELGYQVFAGHLISVTGSNGKTTTTTLIEQMVAMGNPHRVEYAGNIGVSFSKVAEELGPDDTIVTEASSFQLLGAPTYRPHIAVITNIFANHLDYHKTRQNYIDAKLGITRNQTKDDYLVINWDKEEWQKLAKRTNATVVPFSRLAKSQEGAYQKGGDLYWRQERIMAAKDVVLIGPQNVENALAAIAAAKLSGVANEAIVRVLTTFTGVRHRLQYVLDYEGRRFYNDSKSTDIEATEVALQGFEQPVILLAGGLDRGYTFERLVPYFREHVKALIVFGESKDKMKAAGEQAGVKTIVESTDAVTAVPEAWRLSEPGDVILLSPANASWDQFPNFEVRGDRFIEAVEQLTGKKEEN</sequence>
<proteinExistence type="inferred from homology"/>
<reference key="1">
    <citation type="journal article" date="2008" name="DNA Res.">
        <title>Comparative genome analysis of Lactobacillus reuteri and Lactobacillus fermentum reveal a genomic island for reuterin and cobalamin production.</title>
        <authorList>
            <person name="Morita H."/>
            <person name="Toh H."/>
            <person name="Fukuda S."/>
            <person name="Horikawa H."/>
            <person name="Oshima K."/>
            <person name="Suzuki T."/>
            <person name="Murakami M."/>
            <person name="Hisamatsu S."/>
            <person name="Kato Y."/>
            <person name="Takizawa T."/>
            <person name="Fukuoka H."/>
            <person name="Yoshimura T."/>
            <person name="Itoh K."/>
            <person name="O'Sullivan D.J."/>
            <person name="McKay L.L."/>
            <person name="Ohno H."/>
            <person name="Kikuchi J."/>
            <person name="Masaoka T."/>
            <person name="Hattori M."/>
        </authorList>
    </citation>
    <scope>NUCLEOTIDE SEQUENCE [LARGE SCALE GENOMIC DNA]</scope>
    <source>
        <strain>NBRC 3956 / LMG 18251</strain>
    </source>
</reference>
<protein>
    <recommendedName>
        <fullName evidence="1">UDP-N-acetylmuramoylalanine--D-glutamate ligase</fullName>
        <ecNumber evidence="1">6.3.2.9</ecNumber>
    </recommendedName>
    <alternativeName>
        <fullName evidence="1">D-glutamic acid-adding enzyme</fullName>
    </alternativeName>
    <alternativeName>
        <fullName evidence="1">UDP-N-acetylmuramoyl-L-alanyl-D-glutamate synthetase</fullName>
    </alternativeName>
</protein>